<name>MIK_MAIZE</name>
<sequence>MPLAAEPDDAHEERENQQLLITTKGGPGLEGLVVGSYCHDVLIRGGRIVGETLGGAAAFVSNVLDAASPQGAALNETSPFVVVAKVGHDFIYARAPASARHPPLLCSSPTTSFHAQFSETAASAHAPDRELRRVRACDPIYPADLPDRRFAYGLAVGVAGEVLPETLEQMIRLCRTVLVDAQALIRAFDGDGAVGHVALGDTPYARLLPRVAFVKASSEEAPYVGVETTRRQCCVIVTEGRDGCRLYWDGGEAHVAPFPAVQVDPTGAGDSFLAGFAAGLLWGLSATDAALLGNFFGAAAVSQVGVPTFHPKMLQAVKEILEEKTRKRSSPCMNGASFTLEKSNMHNELHAALQEAAVLMSEQQQADPANGSGGDICSA</sequence>
<organism>
    <name type="scientific">Zea mays</name>
    <name type="common">Maize</name>
    <dbReference type="NCBI Taxonomy" id="4577"/>
    <lineage>
        <taxon>Eukaryota</taxon>
        <taxon>Viridiplantae</taxon>
        <taxon>Streptophyta</taxon>
        <taxon>Embryophyta</taxon>
        <taxon>Tracheophyta</taxon>
        <taxon>Spermatophyta</taxon>
        <taxon>Magnoliopsida</taxon>
        <taxon>Liliopsida</taxon>
        <taxon>Poales</taxon>
        <taxon>Poaceae</taxon>
        <taxon>PACMAD clade</taxon>
        <taxon>Panicoideae</taxon>
        <taxon>Andropogonodae</taxon>
        <taxon>Andropogoneae</taxon>
        <taxon>Tripsacinae</taxon>
        <taxon>Zea</taxon>
    </lineage>
</organism>
<proteinExistence type="evidence at protein level"/>
<accession>Q5GA22</accession>
<accession>B6TDQ7</accession>
<dbReference type="EC" id="2.7.1.64" evidence="2"/>
<dbReference type="EMBL" id="AY691949">
    <property type="protein sequence ID" value="AAU93530.1"/>
    <property type="molecule type" value="Genomic_DNA"/>
</dbReference>
<dbReference type="EMBL" id="AY772410">
    <property type="protein sequence ID" value="AAX14809.1"/>
    <property type="molecule type" value="mRNA"/>
</dbReference>
<dbReference type="EMBL" id="EU963122">
    <property type="protein sequence ID" value="ACG35240.1"/>
    <property type="molecule type" value="mRNA"/>
</dbReference>
<dbReference type="EMBL" id="BT033394">
    <property type="protein sequence ID" value="ACF78399.1"/>
    <property type="molecule type" value="mRNA"/>
</dbReference>
<dbReference type="EMBL" id="BT041512">
    <property type="protein sequence ID" value="ACF86517.1"/>
    <property type="molecule type" value="mRNA"/>
</dbReference>
<dbReference type="RefSeq" id="NP_001105790.1">
    <property type="nucleotide sequence ID" value="NM_001112320.1"/>
</dbReference>
<dbReference type="SMR" id="Q5GA22"/>
<dbReference type="FunCoup" id="Q5GA22">
    <property type="interactions" value="94"/>
</dbReference>
<dbReference type="STRING" id="4577.Q5GA22"/>
<dbReference type="PaxDb" id="4577-GRMZM2G361593_P01"/>
<dbReference type="EnsemblPlants" id="Zm00001eb056490_T002">
    <property type="protein sequence ID" value="Zm00001eb056490_P002"/>
    <property type="gene ID" value="Zm00001eb056490"/>
</dbReference>
<dbReference type="GeneID" id="606457"/>
<dbReference type="Gramene" id="Zm00001eb056490_T002">
    <property type="protein sequence ID" value="Zm00001eb056490_P002"/>
    <property type="gene ID" value="Zm00001eb056490"/>
</dbReference>
<dbReference type="KEGG" id="zma:606457"/>
<dbReference type="eggNOG" id="KOG2855">
    <property type="taxonomic scope" value="Eukaryota"/>
</dbReference>
<dbReference type="InParanoid" id="Q5GA22"/>
<dbReference type="OrthoDB" id="497927at2759"/>
<dbReference type="BioCyc" id="MetaCyc:MONOMER-10821"/>
<dbReference type="SABIO-RK" id="Q5GA22"/>
<dbReference type="Proteomes" id="UP000007305">
    <property type="component" value="Chromosome 1"/>
</dbReference>
<dbReference type="ExpressionAtlas" id="Q5GA22">
    <property type="expression patterns" value="baseline and differential"/>
</dbReference>
<dbReference type="GO" id="GO:0005524">
    <property type="term" value="F:ATP binding"/>
    <property type="evidence" value="ECO:0007669"/>
    <property type="project" value="UniProtKB-KW"/>
</dbReference>
<dbReference type="GO" id="GO:0019140">
    <property type="term" value="F:inositol 3-kinase activity"/>
    <property type="evidence" value="ECO:0000314"/>
    <property type="project" value="UniProtKB"/>
</dbReference>
<dbReference type="GO" id="GO:0010264">
    <property type="term" value="P:myo-inositol hexakisphosphate biosynthetic process"/>
    <property type="evidence" value="ECO:0000315"/>
    <property type="project" value="UniProtKB"/>
</dbReference>
<dbReference type="FunFam" id="3.40.1190.20:FF:000026">
    <property type="entry name" value="Inositol 3-kinase"/>
    <property type="match status" value="1"/>
</dbReference>
<dbReference type="Gene3D" id="3.40.1190.20">
    <property type="match status" value="1"/>
</dbReference>
<dbReference type="InterPro" id="IPR002173">
    <property type="entry name" value="Carboh/pur_kinase_PfkB_CS"/>
</dbReference>
<dbReference type="InterPro" id="IPR050306">
    <property type="entry name" value="PfkB_Carbo_kinase"/>
</dbReference>
<dbReference type="InterPro" id="IPR011611">
    <property type="entry name" value="PfkB_dom"/>
</dbReference>
<dbReference type="InterPro" id="IPR029056">
    <property type="entry name" value="Ribokinase-like"/>
</dbReference>
<dbReference type="PANTHER" id="PTHR43085">
    <property type="entry name" value="HEXOKINASE FAMILY MEMBER"/>
    <property type="match status" value="1"/>
</dbReference>
<dbReference type="PANTHER" id="PTHR43085:SF13">
    <property type="entry name" value="INOSITOL 3-KINASE"/>
    <property type="match status" value="1"/>
</dbReference>
<dbReference type="Pfam" id="PF00294">
    <property type="entry name" value="PfkB"/>
    <property type="match status" value="1"/>
</dbReference>
<dbReference type="SUPFAM" id="SSF53613">
    <property type="entry name" value="Ribokinase-like"/>
    <property type="match status" value="1"/>
</dbReference>
<dbReference type="PROSITE" id="PS00584">
    <property type="entry name" value="PFKB_KINASES_2"/>
    <property type="match status" value="1"/>
</dbReference>
<protein>
    <recommendedName>
        <fullName evidence="4">Inositol 3-kinase</fullName>
        <ecNumber evidence="2">2.7.1.64</ecNumber>
    </recommendedName>
    <alternativeName>
        <fullName evidence="3">Myo-inositol kinase</fullName>
    </alternativeName>
    <alternativeName>
        <fullName evidence="3">Protein LOW PHYTIC ACID 3</fullName>
    </alternativeName>
</protein>
<reference key="1">
    <citation type="journal article" date="2005" name="Plant Cell">
        <title>Evolution of DNA sequence nonhomologies among maize inbreds.</title>
        <authorList>
            <person name="Brunner S."/>
            <person name="Fengler K."/>
            <person name="Morgante M."/>
            <person name="Tingey S."/>
            <person name="Rafalski A."/>
        </authorList>
    </citation>
    <scope>NUCLEOTIDE SEQUENCE [GENOMIC DNA]</scope>
</reference>
<reference key="2">
    <citation type="journal article" date="2005" name="Plant J.">
        <title>The maize low-phytic acid 3 encodes a myo-inositol kinase that plays a role in phytic acid biosynthesis in developing seeds.</title>
        <authorList>
            <person name="Shi J."/>
            <person name="Wang H."/>
            <person name="Hazebroek J."/>
            <person name="Ertl D.S."/>
            <person name="Harp T."/>
        </authorList>
    </citation>
    <scope>NUCLEOTIDE SEQUENCE [MRNA]</scope>
    <scope>FUNCTION</scope>
    <scope>CATALYTIC ACTIVITY</scope>
    <scope>BIOPHYSICOCHEMICAL PROPERTIES</scope>
    <scope>DISRUPTION PHENOTYPE</scope>
    <source>
        <strain>cv. B73</strain>
    </source>
</reference>
<reference key="3">
    <citation type="journal article" date="2009" name="Plant Mol. Biol.">
        <title>Insights into corn genes derived from large-scale cDNA sequencing.</title>
        <authorList>
            <person name="Alexandrov N.N."/>
            <person name="Brover V.V."/>
            <person name="Freidin S."/>
            <person name="Troukhan M.E."/>
            <person name="Tatarinova T.V."/>
            <person name="Zhang H."/>
            <person name="Swaller T.J."/>
            <person name="Lu Y.-P."/>
            <person name="Bouck J."/>
            <person name="Flavell R.B."/>
            <person name="Feldmann K.A."/>
        </authorList>
    </citation>
    <scope>NUCLEOTIDE SEQUENCE [LARGE SCALE MRNA]</scope>
</reference>
<reference key="4">
    <citation type="journal article" date="2009" name="PLoS Genet.">
        <title>Sequencing, mapping, and analysis of 27,455 maize full-length cDNAs.</title>
        <authorList>
            <person name="Soderlund C."/>
            <person name="Descour A."/>
            <person name="Kudrna D."/>
            <person name="Bomhoff M."/>
            <person name="Boyd L."/>
            <person name="Currie J."/>
            <person name="Angelova A."/>
            <person name="Collura K."/>
            <person name="Wissotski M."/>
            <person name="Ashley E."/>
            <person name="Morrow D."/>
            <person name="Fernandes J."/>
            <person name="Walbot V."/>
            <person name="Yu Y."/>
        </authorList>
    </citation>
    <scope>NUCLEOTIDE SEQUENCE [LARGE SCALE MRNA]</scope>
    <source>
        <strain>cv. B73</strain>
    </source>
</reference>
<evidence type="ECO:0000250" key="1">
    <source>
        <dbReference type="UniProtKB" id="Q53W83"/>
    </source>
</evidence>
<evidence type="ECO:0000269" key="2">
    <source>
    </source>
</evidence>
<evidence type="ECO:0000303" key="3">
    <source>
    </source>
</evidence>
<evidence type="ECO:0000305" key="4"/>
<keyword id="KW-0067">ATP-binding</keyword>
<keyword id="KW-0418">Kinase</keyword>
<keyword id="KW-0547">Nucleotide-binding</keyword>
<keyword id="KW-1185">Reference proteome</keyword>
<keyword id="KW-0808">Transferase</keyword>
<feature type="chain" id="PRO_0000431866" description="Inositol 3-kinase">
    <location>
        <begin position="1"/>
        <end position="379"/>
    </location>
</feature>
<feature type="active site" description="Proton acceptor" evidence="1">
    <location>
        <position position="270"/>
    </location>
</feature>
<feature type="binding site" evidence="1">
    <location>
        <position position="217"/>
    </location>
    <ligand>
        <name>ATP</name>
        <dbReference type="ChEBI" id="CHEBI:30616"/>
    </ligand>
</feature>
<feature type="binding site" evidence="1">
    <location>
        <begin position="267"/>
        <end position="270"/>
    </location>
    <ligand>
        <name>ATP</name>
        <dbReference type="ChEBI" id="CHEBI:30616"/>
    </ligand>
</feature>
<feature type="binding site" evidence="1">
    <location>
        <position position="294"/>
    </location>
    <ligand>
        <name>ATP</name>
        <dbReference type="ChEBI" id="CHEBI:30616"/>
    </ligand>
</feature>
<feature type="sequence conflict" description="In Ref. 3; ACG35240." evidence="4" ref="3">
    <original>V</original>
    <variation>M</variation>
    <location>
        <position position="134"/>
    </location>
</feature>
<comment type="function">
    <text evidence="2">Kinase that phosphorylates myo-inositol to produce multiple myo-inositol monophosphates, Ins(1)P, Ins(3)P, Ins(4)P, Ins(5)P and Ins(6)P. Participates in phytic acid biosynthesis in developing seeds. Phytic acid is the primary storage form of phosphorus in cereal grains and other plant seeds.</text>
</comment>
<comment type="catalytic activity">
    <reaction evidence="2">
        <text>myo-inositol + ATP = 1D-myo-inositol 3-phosphate + ADP + H(+)</text>
        <dbReference type="Rhea" id="RHEA:21804"/>
        <dbReference type="ChEBI" id="CHEBI:15378"/>
        <dbReference type="ChEBI" id="CHEBI:17268"/>
        <dbReference type="ChEBI" id="CHEBI:30616"/>
        <dbReference type="ChEBI" id="CHEBI:58401"/>
        <dbReference type="ChEBI" id="CHEBI:456216"/>
        <dbReference type="EC" id="2.7.1.64"/>
    </reaction>
</comment>
<comment type="biophysicochemical properties">
    <kinetics>
        <KM evidence="2">53.1 uM for myo-inositol</KM>
        <KM evidence="2">36 uM for ATP</KM>
        <Vmax evidence="2">0.49 umol/min/mg enzyme</Vmax>
    </kinetics>
</comment>
<comment type="disruption phenotype">
    <text evidence="2">Strong reduction in seed phytic acid, and strong increase of inorganic phosphate and myo-inositol levels in seeds.</text>
</comment>
<comment type="similarity">
    <text evidence="4">Belongs to the carbohydrate kinase pfkB family.</text>
</comment>
<gene>
    <name evidence="3" type="primary">MIK</name>
    <name evidence="3" type="synonym">LPA3</name>
</gene>